<gene>
    <name evidence="1" type="primary">rpsK</name>
    <name type="ordered locus">Ldb0421</name>
</gene>
<name>RS11_LACDA</name>
<sequence length="129" mass="13671">MPAKKTAHKRRVKKHVESGVAHIHSTFNNTLVMITDVQGNAVAWSSAGALGFKGSRKSTPFAAQMAAEAAAKSAIDQGMKHIEVSVKGPGSGRESAIRALQAAGLEITSIRDVTPVPHNGSRPPKRRRV</sequence>
<dbReference type="EMBL" id="CR954253">
    <property type="protein sequence ID" value="CAI97256.1"/>
    <property type="molecule type" value="Genomic_DNA"/>
</dbReference>
<dbReference type="RefSeq" id="WP_011543643.1">
    <property type="nucleotide sequence ID" value="NZ_JQAV01000001.1"/>
</dbReference>
<dbReference type="SMR" id="Q1GBJ3"/>
<dbReference type="STRING" id="390333.Ldb0421"/>
<dbReference type="KEGG" id="ldb:Ldb0421"/>
<dbReference type="eggNOG" id="COG0100">
    <property type="taxonomic scope" value="Bacteria"/>
</dbReference>
<dbReference type="HOGENOM" id="CLU_072439_5_0_9"/>
<dbReference type="BioCyc" id="LDEL390333:LDB_RS01790-MONOMER"/>
<dbReference type="Proteomes" id="UP000001259">
    <property type="component" value="Chromosome"/>
</dbReference>
<dbReference type="GO" id="GO:1990904">
    <property type="term" value="C:ribonucleoprotein complex"/>
    <property type="evidence" value="ECO:0007669"/>
    <property type="project" value="UniProtKB-KW"/>
</dbReference>
<dbReference type="GO" id="GO:0005840">
    <property type="term" value="C:ribosome"/>
    <property type="evidence" value="ECO:0007669"/>
    <property type="project" value="UniProtKB-KW"/>
</dbReference>
<dbReference type="GO" id="GO:0019843">
    <property type="term" value="F:rRNA binding"/>
    <property type="evidence" value="ECO:0007669"/>
    <property type="project" value="UniProtKB-UniRule"/>
</dbReference>
<dbReference type="GO" id="GO:0003735">
    <property type="term" value="F:structural constituent of ribosome"/>
    <property type="evidence" value="ECO:0007669"/>
    <property type="project" value="InterPro"/>
</dbReference>
<dbReference type="GO" id="GO:0006412">
    <property type="term" value="P:translation"/>
    <property type="evidence" value="ECO:0007669"/>
    <property type="project" value="UniProtKB-UniRule"/>
</dbReference>
<dbReference type="FunFam" id="3.30.420.80:FF:000001">
    <property type="entry name" value="30S ribosomal protein S11"/>
    <property type="match status" value="1"/>
</dbReference>
<dbReference type="Gene3D" id="3.30.420.80">
    <property type="entry name" value="Ribosomal protein S11"/>
    <property type="match status" value="1"/>
</dbReference>
<dbReference type="HAMAP" id="MF_01310">
    <property type="entry name" value="Ribosomal_uS11"/>
    <property type="match status" value="1"/>
</dbReference>
<dbReference type="InterPro" id="IPR001971">
    <property type="entry name" value="Ribosomal_uS11"/>
</dbReference>
<dbReference type="InterPro" id="IPR019981">
    <property type="entry name" value="Ribosomal_uS11_bac-type"/>
</dbReference>
<dbReference type="InterPro" id="IPR018102">
    <property type="entry name" value="Ribosomal_uS11_CS"/>
</dbReference>
<dbReference type="InterPro" id="IPR036967">
    <property type="entry name" value="Ribosomal_uS11_sf"/>
</dbReference>
<dbReference type="NCBIfam" id="NF003698">
    <property type="entry name" value="PRK05309.1"/>
    <property type="match status" value="1"/>
</dbReference>
<dbReference type="NCBIfam" id="TIGR03632">
    <property type="entry name" value="uS11_bact"/>
    <property type="match status" value="1"/>
</dbReference>
<dbReference type="PANTHER" id="PTHR11759">
    <property type="entry name" value="40S RIBOSOMAL PROTEIN S14/30S RIBOSOMAL PROTEIN S11"/>
    <property type="match status" value="1"/>
</dbReference>
<dbReference type="Pfam" id="PF00411">
    <property type="entry name" value="Ribosomal_S11"/>
    <property type="match status" value="1"/>
</dbReference>
<dbReference type="PIRSF" id="PIRSF002131">
    <property type="entry name" value="Ribosomal_S11"/>
    <property type="match status" value="1"/>
</dbReference>
<dbReference type="SUPFAM" id="SSF53137">
    <property type="entry name" value="Translational machinery components"/>
    <property type="match status" value="1"/>
</dbReference>
<dbReference type="PROSITE" id="PS00054">
    <property type="entry name" value="RIBOSOMAL_S11"/>
    <property type="match status" value="1"/>
</dbReference>
<reference key="1">
    <citation type="journal article" date="2006" name="Proc. Natl. Acad. Sci. U.S.A.">
        <title>The complete genome sequence of Lactobacillus bulgaricus reveals extensive and ongoing reductive evolution.</title>
        <authorList>
            <person name="van de Guchte M."/>
            <person name="Penaud S."/>
            <person name="Grimaldi C."/>
            <person name="Barbe V."/>
            <person name="Bryson K."/>
            <person name="Nicolas P."/>
            <person name="Robert C."/>
            <person name="Oztas S."/>
            <person name="Mangenot S."/>
            <person name="Couloux A."/>
            <person name="Loux V."/>
            <person name="Dervyn R."/>
            <person name="Bossy R."/>
            <person name="Bolotin A."/>
            <person name="Batto J.-M."/>
            <person name="Walunas T."/>
            <person name="Gibrat J.-F."/>
            <person name="Bessieres P."/>
            <person name="Weissenbach J."/>
            <person name="Ehrlich S.D."/>
            <person name="Maguin E."/>
        </authorList>
    </citation>
    <scope>NUCLEOTIDE SEQUENCE [LARGE SCALE GENOMIC DNA]</scope>
    <source>
        <strain>ATCC 11842 / DSM 20081 / BCRC 10696 / JCM 1002 / NBRC 13953 / NCIMB 11778 / NCTC 12712 / WDCM 00102 / Lb 14</strain>
    </source>
</reference>
<proteinExistence type="inferred from homology"/>
<evidence type="ECO:0000255" key="1">
    <source>
        <dbReference type="HAMAP-Rule" id="MF_01310"/>
    </source>
</evidence>
<evidence type="ECO:0000305" key="2"/>
<protein>
    <recommendedName>
        <fullName evidence="1">Small ribosomal subunit protein uS11</fullName>
    </recommendedName>
    <alternativeName>
        <fullName evidence="2">30S ribosomal protein S11</fullName>
    </alternativeName>
</protein>
<keyword id="KW-1185">Reference proteome</keyword>
<keyword id="KW-0687">Ribonucleoprotein</keyword>
<keyword id="KW-0689">Ribosomal protein</keyword>
<keyword id="KW-0694">RNA-binding</keyword>
<keyword id="KW-0699">rRNA-binding</keyword>
<accession>Q1GBJ3</accession>
<comment type="function">
    <text evidence="1">Located on the platform of the 30S subunit, it bridges several disparate RNA helices of the 16S rRNA. Forms part of the Shine-Dalgarno cleft in the 70S ribosome.</text>
</comment>
<comment type="subunit">
    <text evidence="1">Part of the 30S ribosomal subunit. Interacts with proteins S7 and S18. Binds to IF-3.</text>
</comment>
<comment type="similarity">
    <text evidence="1">Belongs to the universal ribosomal protein uS11 family.</text>
</comment>
<organism>
    <name type="scientific">Lactobacillus delbrueckii subsp. bulgaricus (strain ATCC 11842 / DSM 20081 / BCRC 10696 / JCM 1002 / NBRC 13953 / NCIMB 11778 / NCTC 12712 / WDCM 00102 / Lb 14)</name>
    <dbReference type="NCBI Taxonomy" id="390333"/>
    <lineage>
        <taxon>Bacteria</taxon>
        <taxon>Bacillati</taxon>
        <taxon>Bacillota</taxon>
        <taxon>Bacilli</taxon>
        <taxon>Lactobacillales</taxon>
        <taxon>Lactobacillaceae</taxon>
        <taxon>Lactobacillus</taxon>
    </lineage>
</organism>
<feature type="chain" id="PRO_0000294775" description="Small ribosomal subunit protein uS11">
    <location>
        <begin position="1"/>
        <end position="129"/>
    </location>
</feature>